<proteinExistence type="inferred from homology"/>
<evidence type="ECO:0000255" key="1">
    <source>
        <dbReference type="HAMAP-Rule" id="MF_00107"/>
    </source>
</evidence>
<protein>
    <recommendedName>
        <fullName evidence="1">2-C-methyl-D-erythritol 2,4-cyclodiphosphate synthase</fullName>
        <shortName evidence="1">MECDP-synthase</shortName>
        <shortName evidence="1">MECPP-synthase</shortName>
        <shortName evidence="1">MECPS</shortName>
        <ecNumber evidence="1">4.6.1.12</ecNumber>
    </recommendedName>
</protein>
<accession>A3N0G3</accession>
<reference key="1">
    <citation type="journal article" date="2008" name="J. Bacteriol.">
        <title>The complete genome sequence of Actinobacillus pleuropneumoniae L20 (serotype 5b).</title>
        <authorList>
            <person name="Foote S.J."/>
            <person name="Bosse J.T."/>
            <person name="Bouevitch A.B."/>
            <person name="Langford P.R."/>
            <person name="Young N.M."/>
            <person name="Nash J.H.E."/>
        </authorList>
    </citation>
    <scope>NUCLEOTIDE SEQUENCE [LARGE SCALE GENOMIC DNA]</scope>
    <source>
        <strain>L20</strain>
    </source>
</reference>
<feature type="chain" id="PRO_1000022802" description="2-C-methyl-D-erythritol 2,4-cyclodiphosphate synthase">
    <location>
        <begin position="1"/>
        <end position="158"/>
    </location>
</feature>
<feature type="binding site" evidence="1">
    <location>
        <begin position="9"/>
        <end position="11"/>
    </location>
    <ligand>
        <name>4-CDP-2-C-methyl-D-erythritol 2-phosphate</name>
        <dbReference type="ChEBI" id="CHEBI:57919"/>
    </ligand>
</feature>
<feature type="binding site" evidence="1">
    <location>
        <position position="9"/>
    </location>
    <ligand>
        <name>a divalent metal cation</name>
        <dbReference type="ChEBI" id="CHEBI:60240"/>
    </ligand>
</feature>
<feature type="binding site" evidence="1">
    <location>
        <position position="11"/>
    </location>
    <ligand>
        <name>a divalent metal cation</name>
        <dbReference type="ChEBI" id="CHEBI:60240"/>
    </ligand>
</feature>
<feature type="binding site" evidence="1">
    <location>
        <begin position="35"/>
        <end position="36"/>
    </location>
    <ligand>
        <name>4-CDP-2-C-methyl-D-erythritol 2-phosphate</name>
        <dbReference type="ChEBI" id="CHEBI:57919"/>
    </ligand>
</feature>
<feature type="binding site" evidence="1">
    <location>
        <position position="43"/>
    </location>
    <ligand>
        <name>a divalent metal cation</name>
        <dbReference type="ChEBI" id="CHEBI:60240"/>
    </ligand>
</feature>
<feature type="binding site" evidence="1">
    <location>
        <begin position="57"/>
        <end position="59"/>
    </location>
    <ligand>
        <name>4-CDP-2-C-methyl-D-erythritol 2-phosphate</name>
        <dbReference type="ChEBI" id="CHEBI:57919"/>
    </ligand>
</feature>
<feature type="binding site" evidence="1">
    <location>
        <begin position="62"/>
        <end position="66"/>
    </location>
    <ligand>
        <name>4-CDP-2-C-methyl-D-erythritol 2-phosphate</name>
        <dbReference type="ChEBI" id="CHEBI:57919"/>
    </ligand>
</feature>
<feature type="binding site" evidence="1">
    <location>
        <begin position="133"/>
        <end position="136"/>
    </location>
    <ligand>
        <name>4-CDP-2-C-methyl-D-erythritol 2-phosphate</name>
        <dbReference type="ChEBI" id="CHEBI:57919"/>
    </ligand>
</feature>
<feature type="binding site" evidence="1">
    <location>
        <position position="140"/>
    </location>
    <ligand>
        <name>4-CDP-2-C-methyl-D-erythritol 2-phosphate</name>
        <dbReference type="ChEBI" id="CHEBI:57919"/>
    </ligand>
</feature>
<feature type="binding site" evidence="1">
    <location>
        <position position="143"/>
    </location>
    <ligand>
        <name>4-CDP-2-C-methyl-D-erythritol 2-phosphate</name>
        <dbReference type="ChEBI" id="CHEBI:57919"/>
    </ligand>
</feature>
<feature type="site" description="Transition state stabilizer" evidence="1">
    <location>
        <position position="35"/>
    </location>
</feature>
<feature type="site" description="Transition state stabilizer" evidence="1">
    <location>
        <position position="134"/>
    </location>
</feature>
<keyword id="KW-0414">Isoprene biosynthesis</keyword>
<keyword id="KW-0456">Lyase</keyword>
<keyword id="KW-0479">Metal-binding</keyword>
<keyword id="KW-1185">Reference proteome</keyword>
<comment type="function">
    <text evidence="1">Involved in the biosynthesis of isopentenyl diphosphate (IPP) and dimethylallyl diphosphate (DMAPP), two major building blocks of isoprenoid compounds. Catalyzes the conversion of 4-diphosphocytidyl-2-C-methyl-D-erythritol 2-phosphate (CDP-ME2P) to 2-C-methyl-D-erythritol 2,4-cyclodiphosphate (ME-CPP) with a corresponding release of cytidine 5-monophosphate (CMP).</text>
</comment>
<comment type="catalytic activity">
    <reaction evidence="1">
        <text>4-CDP-2-C-methyl-D-erythritol 2-phosphate = 2-C-methyl-D-erythritol 2,4-cyclic diphosphate + CMP</text>
        <dbReference type="Rhea" id="RHEA:23864"/>
        <dbReference type="ChEBI" id="CHEBI:57919"/>
        <dbReference type="ChEBI" id="CHEBI:58483"/>
        <dbReference type="ChEBI" id="CHEBI:60377"/>
        <dbReference type="EC" id="4.6.1.12"/>
    </reaction>
</comment>
<comment type="cofactor">
    <cofactor evidence="1">
        <name>a divalent metal cation</name>
        <dbReference type="ChEBI" id="CHEBI:60240"/>
    </cofactor>
    <text evidence="1">Binds 1 divalent metal cation per subunit.</text>
</comment>
<comment type="pathway">
    <text evidence="1">Isoprenoid biosynthesis; isopentenyl diphosphate biosynthesis via DXP pathway; isopentenyl diphosphate from 1-deoxy-D-xylulose 5-phosphate: step 4/6.</text>
</comment>
<comment type="subunit">
    <text evidence="1">Homotrimer.</text>
</comment>
<comment type="similarity">
    <text evidence="1">Belongs to the IspF family.</text>
</comment>
<organism>
    <name type="scientific">Actinobacillus pleuropneumoniae serotype 5b (strain L20)</name>
    <dbReference type="NCBI Taxonomy" id="416269"/>
    <lineage>
        <taxon>Bacteria</taxon>
        <taxon>Pseudomonadati</taxon>
        <taxon>Pseudomonadota</taxon>
        <taxon>Gammaproteobacteria</taxon>
        <taxon>Pasteurellales</taxon>
        <taxon>Pasteurellaceae</taxon>
        <taxon>Actinobacillus</taxon>
    </lineage>
</organism>
<name>ISPF_ACTP2</name>
<gene>
    <name evidence="1" type="primary">ispF</name>
    <name type="ordered locus">APL_0803</name>
</gene>
<dbReference type="EC" id="4.6.1.12" evidence="1"/>
<dbReference type="EMBL" id="CP000569">
    <property type="protein sequence ID" value="ABN73899.1"/>
    <property type="molecule type" value="Genomic_DNA"/>
</dbReference>
<dbReference type="RefSeq" id="WP_005604392.1">
    <property type="nucleotide sequence ID" value="NC_009053.1"/>
</dbReference>
<dbReference type="SMR" id="A3N0G3"/>
<dbReference type="STRING" id="416269.APL_0803"/>
<dbReference type="EnsemblBacteria" id="ABN73899">
    <property type="protein sequence ID" value="ABN73899"/>
    <property type="gene ID" value="APL_0803"/>
</dbReference>
<dbReference type="KEGG" id="apl:APL_0803"/>
<dbReference type="eggNOG" id="COG0245">
    <property type="taxonomic scope" value="Bacteria"/>
</dbReference>
<dbReference type="HOGENOM" id="CLU_084630_2_0_6"/>
<dbReference type="UniPathway" id="UPA00056">
    <property type="reaction ID" value="UER00095"/>
</dbReference>
<dbReference type="Proteomes" id="UP000001432">
    <property type="component" value="Chromosome"/>
</dbReference>
<dbReference type="GO" id="GO:0008685">
    <property type="term" value="F:2-C-methyl-D-erythritol 2,4-cyclodiphosphate synthase activity"/>
    <property type="evidence" value="ECO:0007669"/>
    <property type="project" value="UniProtKB-UniRule"/>
</dbReference>
<dbReference type="GO" id="GO:0046872">
    <property type="term" value="F:metal ion binding"/>
    <property type="evidence" value="ECO:0007669"/>
    <property type="project" value="UniProtKB-KW"/>
</dbReference>
<dbReference type="GO" id="GO:0019288">
    <property type="term" value="P:isopentenyl diphosphate biosynthetic process, methylerythritol 4-phosphate pathway"/>
    <property type="evidence" value="ECO:0007669"/>
    <property type="project" value="UniProtKB-UniRule"/>
</dbReference>
<dbReference type="GO" id="GO:0016114">
    <property type="term" value="P:terpenoid biosynthetic process"/>
    <property type="evidence" value="ECO:0007669"/>
    <property type="project" value="InterPro"/>
</dbReference>
<dbReference type="CDD" id="cd00554">
    <property type="entry name" value="MECDP_synthase"/>
    <property type="match status" value="1"/>
</dbReference>
<dbReference type="FunFam" id="3.30.1330.50:FF:000001">
    <property type="entry name" value="2-C-methyl-D-erythritol 2,4-cyclodiphosphate synthase"/>
    <property type="match status" value="1"/>
</dbReference>
<dbReference type="Gene3D" id="3.30.1330.50">
    <property type="entry name" value="2-C-methyl-D-erythritol 2,4-cyclodiphosphate synthase"/>
    <property type="match status" value="1"/>
</dbReference>
<dbReference type="HAMAP" id="MF_00107">
    <property type="entry name" value="IspF"/>
    <property type="match status" value="1"/>
</dbReference>
<dbReference type="InterPro" id="IPR003526">
    <property type="entry name" value="MECDP_synthase"/>
</dbReference>
<dbReference type="InterPro" id="IPR020555">
    <property type="entry name" value="MECDP_synthase_CS"/>
</dbReference>
<dbReference type="InterPro" id="IPR036571">
    <property type="entry name" value="MECDP_synthase_sf"/>
</dbReference>
<dbReference type="NCBIfam" id="TIGR00151">
    <property type="entry name" value="ispF"/>
    <property type="match status" value="1"/>
</dbReference>
<dbReference type="PANTHER" id="PTHR43181">
    <property type="entry name" value="2-C-METHYL-D-ERYTHRITOL 2,4-CYCLODIPHOSPHATE SYNTHASE, CHLOROPLASTIC"/>
    <property type="match status" value="1"/>
</dbReference>
<dbReference type="PANTHER" id="PTHR43181:SF1">
    <property type="entry name" value="2-C-METHYL-D-ERYTHRITOL 2,4-CYCLODIPHOSPHATE SYNTHASE, CHLOROPLASTIC"/>
    <property type="match status" value="1"/>
</dbReference>
<dbReference type="Pfam" id="PF02542">
    <property type="entry name" value="YgbB"/>
    <property type="match status" value="1"/>
</dbReference>
<dbReference type="SUPFAM" id="SSF69765">
    <property type="entry name" value="IpsF-like"/>
    <property type="match status" value="1"/>
</dbReference>
<dbReference type="PROSITE" id="PS01350">
    <property type="entry name" value="ISPF"/>
    <property type="match status" value="1"/>
</dbReference>
<sequence length="158" mass="17245">MIRIGHGFDVHAFGQDRPLMICGVEVPYHTGFIAHSDGDVALHALTDALLGAVALGDIGKLFPDTDMQYKNADSRKLLIEAYRQVRAQGYKVANVDVTIIAQAPKMRPYIDQMRQTIADDLQCDAMQVNVKATTTEKLGFTGRGEGIACEAVALLIKQ</sequence>